<feature type="chain" id="PRO_0000322355" description="Small ribosomal subunit protein uS4">
    <location>
        <begin position="1"/>
        <end position="180"/>
    </location>
</feature>
<feature type="domain" description="S4 RNA-binding" evidence="1">
    <location>
        <begin position="104"/>
        <end position="166"/>
    </location>
</feature>
<feature type="region of interest" description="Disordered" evidence="2">
    <location>
        <begin position="155"/>
        <end position="180"/>
    </location>
</feature>
<sequence length="180" mass="20428">MGDPRKSRRKWEGPGMPWLSQALKSEQKIMGDYGLRNKKEIWLARTIVTGYRHMARSLLALPPAERAVREKQLLGKLYKLGLLKSEQSTIDDILGLEEESLLERRLQTIVHRKGLARTIYQARQLIVHGHIAVGGRKITSPGYIVKRDEEDSIDFYPTSPFKNNPPTAGQGEVNVEQKGN</sequence>
<proteinExistence type="inferred from homology"/>
<keyword id="KW-1185">Reference proteome</keyword>
<keyword id="KW-0687">Ribonucleoprotein</keyword>
<keyword id="KW-0689">Ribosomal protein</keyword>
<keyword id="KW-0694">RNA-binding</keyword>
<keyword id="KW-0699">rRNA-binding</keyword>
<evidence type="ECO:0000255" key="1">
    <source>
        <dbReference type="HAMAP-Rule" id="MF_01306"/>
    </source>
</evidence>
<evidence type="ECO:0000256" key="2">
    <source>
        <dbReference type="SAM" id="MobiDB-lite"/>
    </source>
</evidence>
<evidence type="ECO:0000305" key="3"/>
<comment type="function">
    <text evidence="1">One of the primary rRNA binding proteins, it binds directly to 16S rRNA where it nucleates assembly of the body of the 30S subunit.</text>
</comment>
<comment type="function">
    <text evidence="1">With S5 and S12 plays an important role in translational accuracy.</text>
</comment>
<comment type="subunit">
    <text evidence="1">Part of the 30S ribosomal subunit. Contacts protein S5. The interaction surface between S4 and S5 is involved in control of translational fidelity.</text>
</comment>
<comment type="similarity">
    <text evidence="1">Belongs to the universal ribosomal protein uS4 family.</text>
</comment>
<name>RS4_METS5</name>
<dbReference type="EMBL" id="CP000682">
    <property type="protein sequence ID" value="ABP96286.1"/>
    <property type="molecule type" value="Genomic_DNA"/>
</dbReference>
<dbReference type="RefSeq" id="WP_012022073.1">
    <property type="nucleotide sequence ID" value="NZ_CP139956.1"/>
</dbReference>
<dbReference type="SMR" id="A4YIN4"/>
<dbReference type="STRING" id="399549.Msed_2147"/>
<dbReference type="KEGG" id="mse:Msed_2147"/>
<dbReference type="eggNOG" id="arCOG04239">
    <property type="taxonomic scope" value="Archaea"/>
</dbReference>
<dbReference type="HOGENOM" id="CLU_089738_1_1_2"/>
<dbReference type="Proteomes" id="UP000000242">
    <property type="component" value="Chromosome"/>
</dbReference>
<dbReference type="GO" id="GO:0015935">
    <property type="term" value="C:small ribosomal subunit"/>
    <property type="evidence" value="ECO:0007669"/>
    <property type="project" value="InterPro"/>
</dbReference>
<dbReference type="GO" id="GO:0019843">
    <property type="term" value="F:rRNA binding"/>
    <property type="evidence" value="ECO:0007669"/>
    <property type="project" value="UniProtKB-UniRule"/>
</dbReference>
<dbReference type="GO" id="GO:0003735">
    <property type="term" value="F:structural constituent of ribosome"/>
    <property type="evidence" value="ECO:0007669"/>
    <property type="project" value="InterPro"/>
</dbReference>
<dbReference type="GO" id="GO:0042274">
    <property type="term" value="P:ribosomal small subunit biogenesis"/>
    <property type="evidence" value="ECO:0007669"/>
    <property type="project" value="TreeGrafter"/>
</dbReference>
<dbReference type="GO" id="GO:0006412">
    <property type="term" value="P:translation"/>
    <property type="evidence" value="ECO:0007669"/>
    <property type="project" value="UniProtKB-UniRule"/>
</dbReference>
<dbReference type="CDD" id="cd00165">
    <property type="entry name" value="S4"/>
    <property type="match status" value="1"/>
</dbReference>
<dbReference type="Gene3D" id="3.10.290.10">
    <property type="entry name" value="RNA-binding S4 domain"/>
    <property type="match status" value="1"/>
</dbReference>
<dbReference type="HAMAP" id="MF_01306_A">
    <property type="entry name" value="Ribosomal_uS4_A"/>
    <property type="match status" value="1"/>
</dbReference>
<dbReference type="InterPro" id="IPR022801">
    <property type="entry name" value="Ribosomal_uS4"/>
</dbReference>
<dbReference type="InterPro" id="IPR022802">
    <property type="entry name" value="Ribosomal_uS4_arc"/>
</dbReference>
<dbReference type="InterPro" id="IPR018079">
    <property type="entry name" value="Ribosomal_uS4_CS"/>
</dbReference>
<dbReference type="InterPro" id="IPR005710">
    <property type="entry name" value="Ribosomal_uS4_euk/arc"/>
</dbReference>
<dbReference type="InterPro" id="IPR001912">
    <property type="entry name" value="Ribosomal_uS4_N"/>
</dbReference>
<dbReference type="InterPro" id="IPR002942">
    <property type="entry name" value="S4_RNA-bd"/>
</dbReference>
<dbReference type="InterPro" id="IPR036986">
    <property type="entry name" value="S4_RNA-bd_sf"/>
</dbReference>
<dbReference type="NCBIfam" id="NF003139">
    <property type="entry name" value="PRK04051.1"/>
    <property type="match status" value="1"/>
</dbReference>
<dbReference type="NCBIfam" id="TIGR01018">
    <property type="entry name" value="uS4_arch"/>
    <property type="match status" value="1"/>
</dbReference>
<dbReference type="PANTHER" id="PTHR11831">
    <property type="entry name" value="30S 40S RIBOSOMAL PROTEIN"/>
    <property type="match status" value="1"/>
</dbReference>
<dbReference type="PANTHER" id="PTHR11831:SF5">
    <property type="entry name" value="40S RIBOSOMAL PROTEIN S9"/>
    <property type="match status" value="1"/>
</dbReference>
<dbReference type="Pfam" id="PF00163">
    <property type="entry name" value="Ribosomal_S4"/>
    <property type="match status" value="1"/>
</dbReference>
<dbReference type="Pfam" id="PF01479">
    <property type="entry name" value="S4"/>
    <property type="match status" value="1"/>
</dbReference>
<dbReference type="SMART" id="SM01390">
    <property type="entry name" value="Ribosomal_S4"/>
    <property type="match status" value="1"/>
</dbReference>
<dbReference type="SMART" id="SM00363">
    <property type="entry name" value="S4"/>
    <property type="match status" value="1"/>
</dbReference>
<dbReference type="SUPFAM" id="SSF55174">
    <property type="entry name" value="Alpha-L RNA-binding motif"/>
    <property type="match status" value="1"/>
</dbReference>
<dbReference type="PROSITE" id="PS00632">
    <property type="entry name" value="RIBOSOMAL_S4"/>
    <property type="match status" value="1"/>
</dbReference>
<dbReference type="PROSITE" id="PS50889">
    <property type="entry name" value="S4"/>
    <property type="match status" value="1"/>
</dbReference>
<protein>
    <recommendedName>
        <fullName evidence="1">Small ribosomal subunit protein uS4</fullName>
    </recommendedName>
    <alternativeName>
        <fullName evidence="3">30S ribosomal protein S4</fullName>
    </alternativeName>
</protein>
<accession>A4YIN4</accession>
<reference key="1">
    <citation type="journal article" date="2008" name="Appl. Environ. Microbiol.">
        <title>The genome sequence of the metal-mobilizing, extremely thermoacidophilic archaeon Metallosphaera sedula provides insights into bioleaching-associated metabolism.</title>
        <authorList>
            <person name="Auernik K.S."/>
            <person name="Maezato Y."/>
            <person name="Blum P.H."/>
            <person name="Kelly R.M."/>
        </authorList>
    </citation>
    <scope>NUCLEOTIDE SEQUENCE [LARGE SCALE GENOMIC DNA]</scope>
    <source>
        <strain>ATCC 51363 / DSM 5348 / JCM 9185 / NBRC 15509 / TH2</strain>
    </source>
</reference>
<organism>
    <name type="scientific">Metallosphaera sedula (strain ATCC 51363 / DSM 5348 / JCM 9185 / NBRC 15509 / TH2)</name>
    <dbReference type="NCBI Taxonomy" id="399549"/>
    <lineage>
        <taxon>Archaea</taxon>
        <taxon>Thermoproteota</taxon>
        <taxon>Thermoprotei</taxon>
        <taxon>Sulfolobales</taxon>
        <taxon>Sulfolobaceae</taxon>
        <taxon>Metallosphaera</taxon>
    </lineage>
</organism>
<gene>
    <name evidence="1" type="primary">rps4</name>
    <name type="ordered locus">Msed_2147</name>
</gene>